<name>SYS_AYWBP</name>
<reference key="1">
    <citation type="journal article" date="2006" name="J. Bacteriol.">
        <title>Living with genome instability: the adaptation of phytoplasmas to diverse environments of their insect and plant hosts.</title>
        <authorList>
            <person name="Bai X."/>
            <person name="Zhang J."/>
            <person name="Ewing A."/>
            <person name="Miller S.A."/>
            <person name="Jancso Radek A."/>
            <person name="Shevchenko D.V."/>
            <person name="Tsukerman K."/>
            <person name="Walunas T."/>
            <person name="Lapidus A."/>
            <person name="Campbell J.W."/>
            <person name="Hogenhout S.A."/>
        </authorList>
    </citation>
    <scope>NUCLEOTIDE SEQUENCE [LARGE SCALE GENOMIC DNA]</scope>
    <source>
        <strain>AYWB</strain>
    </source>
</reference>
<proteinExistence type="inferred from homology"/>
<organism>
    <name type="scientific">Aster yellows witches'-broom phytoplasma (strain AYWB)</name>
    <dbReference type="NCBI Taxonomy" id="322098"/>
    <lineage>
        <taxon>Bacteria</taxon>
        <taxon>Bacillati</taxon>
        <taxon>Mycoplasmatota</taxon>
        <taxon>Mollicutes</taxon>
        <taxon>Acholeplasmatales</taxon>
        <taxon>Acholeplasmataceae</taxon>
        <taxon>Candidatus Phytoplasma</taxon>
        <taxon>16SrI (Aster yellows group)</taxon>
    </lineage>
</organism>
<sequence length="424" mass="48749">MLDLNFVVQNLPSVIAKLEKRQQSFAYLNKLPLLAQQRKSLLLQIQNLRSQKNQSAKKVAQKANAKEDIALFLQENNFLRDDLQKLEQKLKLQEQEIFDILSITPNLPHDSLPIGTDDKDNKELYCEGQIRTFPFTPKDHVYLAEKLDILDFKRASKISGSGFVVCKGLGARLERALIQFMMDLHSKKGYQEIIPPYIINEKSMFATGQLPKFEDEVYKLYNSKNNWYLNPTAEVPTINLHREEIFKPGTLPIKYVSYTTAFRQEAGSAGKDTRGIFRQHQFNKVELIQFCHPQNSYEYLEQMLKDSEEILKLLKLPYRVVLLSTGDLGFSMSKTYDLEVFLPSYNCYREIGSISNSCDFQARRANIKMKNPKNNKNEYVHILNGSGLAVGRTVIAILENYQNQDGTITVPEILQSYLGTDIIK</sequence>
<feature type="chain" id="PRO_1000019613" description="Serine--tRNA ligase">
    <location>
        <begin position="1"/>
        <end position="424"/>
    </location>
</feature>
<feature type="binding site" evidence="1">
    <location>
        <begin position="232"/>
        <end position="234"/>
    </location>
    <ligand>
        <name>L-serine</name>
        <dbReference type="ChEBI" id="CHEBI:33384"/>
    </ligand>
</feature>
<feature type="binding site" evidence="1">
    <location>
        <begin position="263"/>
        <end position="265"/>
    </location>
    <ligand>
        <name>ATP</name>
        <dbReference type="ChEBI" id="CHEBI:30616"/>
    </ligand>
</feature>
<feature type="binding site" evidence="1">
    <location>
        <position position="286"/>
    </location>
    <ligand>
        <name>L-serine</name>
        <dbReference type="ChEBI" id="CHEBI:33384"/>
    </ligand>
</feature>
<feature type="binding site" evidence="1">
    <location>
        <begin position="350"/>
        <end position="353"/>
    </location>
    <ligand>
        <name>ATP</name>
        <dbReference type="ChEBI" id="CHEBI:30616"/>
    </ligand>
</feature>
<feature type="binding site" evidence="1">
    <location>
        <position position="386"/>
    </location>
    <ligand>
        <name>L-serine</name>
        <dbReference type="ChEBI" id="CHEBI:33384"/>
    </ligand>
</feature>
<comment type="function">
    <text evidence="1">Catalyzes the attachment of serine to tRNA(Ser). Is also able to aminoacylate tRNA(Sec) with serine, to form the misacylated tRNA L-seryl-tRNA(Sec), which will be further converted into selenocysteinyl-tRNA(Sec).</text>
</comment>
<comment type="catalytic activity">
    <reaction evidence="1">
        <text>tRNA(Ser) + L-serine + ATP = L-seryl-tRNA(Ser) + AMP + diphosphate + H(+)</text>
        <dbReference type="Rhea" id="RHEA:12292"/>
        <dbReference type="Rhea" id="RHEA-COMP:9669"/>
        <dbReference type="Rhea" id="RHEA-COMP:9703"/>
        <dbReference type="ChEBI" id="CHEBI:15378"/>
        <dbReference type="ChEBI" id="CHEBI:30616"/>
        <dbReference type="ChEBI" id="CHEBI:33019"/>
        <dbReference type="ChEBI" id="CHEBI:33384"/>
        <dbReference type="ChEBI" id="CHEBI:78442"/>
        <dbReference type="ChEBI" id="CHEBI:78533"/>
        <dbReference type="ChEBI" id="CHEBI:456215"/>
        <dbReference type="EC" id="6.1.1.11"/>
    </reaction>
</comment>
<comment type="catalytic activity">
    <reaction evidence="1">
        <text>tRNA(Sec) + L-serine + ATP = L-seryl-tRNA(Sec) + AMP + diphosphate + H(+)</text>
        <dbReference type="Rhea" id="RHEA:42580"/>
        <dbReference type="Rhea" id="RHEA-COMP:9742"/>
        <dbReference type="Rhea" id="RHEA-COMP:10128"/>
        <dbReference type="ChEBI" id="CHEBI:15378"/>
        <dbReference type="ChEBI" id="CHEBI:30616"/>
        <dbReference type="ChEBI" id="CHEBI:33019"/>
        <dbReference type="ChEBI" id="CHEBI:33384"/>
        <dbReference type="ChEBI" id="CHEBI:78442"/>
        <dbReference type="ChEBI" id="CHEBI:78533"/>
        <dbReference type="ChEBI" id="CHEBI:456215"/>
        <dbReference type="EC" id="6.1.1.11"/>
    </reaction>
</comment>
<comment type="pathway">
    <text evidence="1">Aminoacyl-tRNA biosynthesis; selenocysteinyl-tRNA(Sec) biosynthesis; L-seryl-tRNA(Sec) from L-serine and tRNA(Sec): step 1/1.</text>
</comment>
<comment type="subunit">
    <text evidence="1">Homodimer. The tRNA molecule binds across the dimer.</text>
</comment>
<comment type="subcellular location">
    <subcellularLocation>
        <location evidence="1">Cytoplasm</location>
    </subcellularLocation>
</comment>
<comment type="domain">
    <text evidence="1">Consists of two distinct domains, a catalytic core and a N-terminal extension that is involved in tRNA binding.</text>
</comment>
<comment type="similarity">
    <text evidence="1">Belongs to the class-II aminoacyl-tRNA synthetase family. Type-1 seryl-tRNA synthetase subfamily.</text>
</comment>
<protein>
    <recommendedName>
        <fullName evidence="1">Serine--tRNA ligase</fullName>
        <ecNumber evidence="1">6.1.1.11</ecNumber>
    </recommendedName>
    <alternativeName>
        <fullName evidence="1">Seryl-tRNA synthetase</fullName>
        <shortName evidence="1">SerRS</shortName>
    </alternativeName>
    <alternativeName>
        <fullName evidence="1">Seryl-tRNA(Ser/Sec) synthetase</fullName>
    </alternativeName>
</protein>
<dbReference type="EC" id="6.1.1.11" evidence="1"/>
<dbReference type="EMBL" id="CP000061">
    <property type="protein sequence ID" value="ABC65749.1"/>
    <property type="molecule type" value="Genomic_DNA"/>
</dbReference>
<dbReference type="RefSeq" id="WP_011412910.1">
    <property type="nucleotide sequence ID" value="NC_007716.1"/>
</dbReference>
<dbReference type="SMR" id="Q2NIJ4"/>
<dbReference type="STRING" id="322098.AYWB_632"/>
<dbReference type="KEGG" id="ayw:AYWB_632"/>
<dbReference type="eggNOG" id="COG0172">
    <property type="taxonomic scope" value="Bacteria"/>
</dbReference>
<dbReference type="HOGENOM" id="CLU_023797_1_1_14"/>
<dbReference type="OrthoDB" id="9804647at2"/>
<dbReference type="PhylomeDB" id="Q2NIJ4"/>
<dbReference type="UniPathway" id="UPA00906">
    <property type="reaction ID" value="UER00895"/>
</dbReference>
<dbReference type="Proteomes" id="UP000001934">
    <property type="component" value="Chromosome"/>
</dbReference>
<dbReference type="GO" id="GO:0005737">
    <property type="term" value="C:cytoplasm"/>
    <property type="evidence" value="ECO:0007669"/>
    <property type="project" value="UniProtKB-SubCell"/>
</dbReference>
<dbReference type="GO" id="GO:0005524">
    <property type="term" value="F:ATP binding"/>
    <property type="evidence" value="ECO:0007669"/>
    <property type="project" value="UniProtKB-UniRule"/>
</dbReference>
<dbReference type="GO" id="GO:0004828">
    <property type="term" value="F:serine-tRNA ligase activity"/>
    <property type="evidence" value="ECO:0007669"/>
    <property type="project" value="UniProtKB-UniRule"/>
</dbReference>
<dbReference type="GO" id="GO:0016260">
    <property type="term" value="P:selenocysteine biosynthetic process"/>
    <property type="evidence" value="ECO:0007669"/>
    <property type="project" value="UniProtKB-UniRule"/>
</dbReference>
<dbReference type="GO" id="GO:0006434">
    <property type="term" value="P:seryl-tRNA aminoacylation"/>
    <property type="evidence" value="ECO:0007669"/>
    <property type="project" value="UniProtKB-UniRule"/>
</dbReference>
<dbReference type="CDD" id="cd00770">
    <property type="entry name" value="SerRS_core"/>
    <property type="match status" value="1"/>
</dbReference>
<dbReference type="Gene3D" id="3.30.930.10">
    <property type="entry name" value="Bira Bifunctional Protein, Domain 2"/>
    <property type="match status" value="1"/>
</dbReference>
<dbReference type="Gene3D" id="1.10.287.40">
    <property type="entry name" value="Serine-tRNA synthetase, tRNA binding domain"/>
    <property type="match status" value="1"/>
</dbReference>
<dbReference type="HAMAP" id="MF_00176">
    <property type="entry name" value="Ser_tRNA_synth_type1"/>
    <property type="match status" value="1"/>
</dbReference>
<dbReference type="InterPro" id="IPR002314">
    <property type="entry name" value="aa-tRNA-synt_IIb"/>
</dbReference>
<dbReference type="InterPro" id="IPR006195">
    <property type="entry name" value="aa-tRNA-synth_II"/>
</dbReference>
<dbReference type="InterPro" id="IPR045864">
    <property type="entry name" value="aa-tRNA-synth_II/BPL/LPL"/>
</dbReference>
<dbReference type="InterPro" id="IPR002317">
    <property type="entry name" value="Ser-tRNA-ligase_type_1"/>
</dbReference>
<dbReference type="InterPro" id="IPR015866">
    <property type="entry name" value="Ser-tRNA-synth_1_N"/>
</dbReference>
<dbReference type="InterPro" id="IPR042103">
    <property type="entry name" value="SerRS_1_N_sf"/>
</dbReference>
<dbReference type="InterPro" id="IPR033729">
    <property type="entry name" value="SerRS_core"/>
</dbReference>
<dbReference type="InterPro" id="IPR010978">
    <property type="entry name" value="tRNA-bd_arm"/>
</dbReference>
<dbReference type="NCBIfam" id="TIGR00414">
    <property type="entry name" value="serS"/>
    <property type="match status" value="1"/>
</dbReference>
<dbReference type="PANTHER" id="PTHR43697:SF1">
    <property type="entry name" value="SERINE--TRNA LIGASE"/>
    <property type="match status" value="1"/>
</dbReference>
<dbReference type="PANTHER" id="PTHR43697">
    <property type="entry name" value="SERYL-TRNA SYNTHETASE"/>
    <property type="match status" value="1"/>
</dbReference>
<dbReference type="Pfam" id="PF02403">
    <property type="entry name" value="Seryl_tRNA_N"/>
    <property type="match status" value="1"/>
</dbReference>
<dbReference type="Pfam" id="PF00587">
    <property type="entry name" value="tRNA-synt_2b"/>
    <property type="match status" value="1"/>
</dbReference>
<dbReference type="PIRSF" id="PIRSF001529">
    <property type="entry name" value="Ser-tRNA-synth_IIa"/>
    <property type="match status" value="1"/>
</dbReference>
<dbReference type="PRINTS" id="PR00981">
    <property type="entry name" value="TRNASYNTHSER"/>
</dbReference>
<dbReference type="SUPFAM" id="SSF55681">
    <property type="entry name" value="Class II aaRS and biotin synthetases"/>
    <property type="match status" value="1"/>
</dbReference>
<dbReference type="SUPFAM" id="SSF46589">
    <property type="entry name" value="tRNA-binding arm"/>
    <property type="match status" value="1"/>
</dbReference>
<dbReference type="PROSITE" id="PS50862">
    <property type="entry name" value="AA_TRNA_LIGASE_II"/>
    <property type="match status" value="1"/>
</dbReference>
<gene>
    <name evidence="1" type="primary">serS</name>
    <name type="ordered locus">AYWB_632</name>
</gene>
<evidence type="ECO:0000255" key="1">
    <source>
        <dbReference type="HAMAP-Rule" id="MF_00176"/>
    </source>
</evidence>
<accession>Q2NIJ4</accession>
<keyword id="KW-0030">Aminoacyl-tRNA synthetase</keyword>
<keyword id="KW-0067">ATP-binding</keyword>
<keyword id="KW-0963">Cytoplasm</keyword>
<keyword id="KW-0436">Ligase</keyword>
<keyword id="KW-0547">Nucleotide-binding</keyword>
<keyword id="KW-0648">Protein biosynthesis</keyword>